<dbReference type="EMBL" id="BX936398">
    <property type="protein sequence ID" value="CAH23211.1"/>
    <property type="molecule type" value="Genomic_DNA"/>
</dbReference>
<dbReference type="RefSeq" id="WP_002228150.1">
    <property type="nucleotide sequence ID" value="NZ_CP009712.1"/>
</dbReference>
<dbReference type="SMR" id="Q663Q2"/>
<dbReference type="GeneID" id="96663465"/>
<dbReference type="KEGG" id="ypo:BZ17_2602"/>
<dbReference type="KEGG" id="yps:YPTB3973"/>
<dbReference type="PATRIC" id="fig|273123.14.peg.2728"/>
<dbReference type="Proteomes" id="UP000001011">
    <property type="component" value="Chromosome"/>
</dbReference>
<dbReference type="GO" id="GO:0005886">
    <property type="term" value="C:plasma membrane"/>
    <property type="evidence" value="ECO:0007669"/>
    <property type="project" value="UniProtKB-SubCell"/>
</dbReference>
<dbReference type="GO" id="GO:0045259">
    <property type="term" value="C:proton-transporting ATP synthase complex"/>
    <property type="evidence" value="ECO:0007669"/>
    <property type="project" value="UniProtKB-KW"/>
</dbReference>
<dbReference type="GO" id="GO:0046933">
    <property type="term" value="F:proton-transporting ATP synthase activity, rotational mechanism"/>
    <property type="evidence" value="ECO:0007669"/>
    <property type="project" value="UniProtKB-UniRule"/>
</dbReference>
<dbReference type="GO" id="GO:0042777">
    <property type="term" value="P:proton motive force-driven plasma membrane ATP synthesis"/>
    <property type="evidence" value="ECO:0007669"/>
    <property type="project" value="TreeGrafter"/>
</dbReference>
<dbReference type="CDD" id="cd00310">
    <property type="entry name" value="ATP-synt_Fo_a_6"/>
    <property type="match status" value="1"/>
</dbReference>
<dbReference type="FunFam" id="1.20.120.220:FF:000002">
    <property type="entry name" value="ATP synthase subunit a"/>
    <property type="match status" value="1"/>
</dbReference>
<dbReference type="Gene3D" id="1.20.120.220">
    <property type="entry name" value="ATP synthase, F0 complex, subunit A"/>
    <property type="match status" value="1"/>
</dbReference>
<dbReference type="HAMAP" id="MF_01393">
    <property type="entry name" value="ATP_synth_a_bact"/>
    <property type="match status" value="1"/>
</dbReference>
<dbReference type="InterPro" id="IPR045082">
    <property type="entry name" value="ATP_syn_F0_a_bact/chloroplast"/>
</dbReference>
<dbReference type="InterPro" id="IPR000568">
    <property type="entry name" value="ATP_synth_F0_asu"/>
</dbReference>
<dbReference type="InterPro" id="IPR023011">
    <property type="entry name" value="ATP_synth_F0_asu_AS"/>
</dbReference>
<dbReference type="InterPro" id="IPR035908">
    <property type="entry name" value="F0_ATP_A_sf"/>
</dbReference>
<dbReference type="NCBIfam" id="TIGR01131">
    <property type="entry name" value="ATP_synt_6_or_A"/>
    <property type="match status" value="1"/>
</dbReference>
<dbReference type="NCBIfam" id="NF004477">
    <property type="entry name" value="PRK05815.1-1"/>
    <property type="match status" value="1"/>
</dbReference>
<dbReference type="PANTHER" id="PTHR42823">
    <property type="entry name" value="ATP SYNTHASE SUBUNIT A, CHLOROPLASTIC"/>
    <property type="match status" value="1"/>
</dbReference>
<dbReference type="PANTHER" id="PTHR42823:SF3">
    <property type="entry name" value="ATP SYNTHASE SUBUNIT A, CHLOROPLASTIC"/>
    <property type="match status" value="1"/>
</dbReference>
<dbReference type="Pfam" id="PF00119">
    <property type="entry name" value="ATP-synt_A"/>
    <property type="match status" value="1"/>
</dbReference>
<dbReference type="PRINTS" id="PR00123">
    <property type="entry name" value="ATPASEA"/>
</dbReference>
<dbReference type="SUPFAM" id="SSF81336">
    <property type="entry name" value="F1F0 ATP synthase subunit A"/>
    <property type="match status" value="1"/>
</dbReference>
<dbReference type="PROSITE" id="PS00449">
    <property type="entry name" value="ATPASE_A"/>
    <property type="match status" value="1"/>
</dbReference>
<name>ATP6_YERPS</name>
<reference key="1">
    <citation type="journal article" date="2004" name="Proc. Natl. Acad. Sci. U.S.A.">
        <title>Insights into the evolution of Yersinia pestis through whole-genome comparison with Yersinia pseudotuberculosis.</title>
        <authorList>
            <person name="Chain P.S.G."/>
            <person name="Carniel E."/>
            <person name="Larimer F.W."/>
            <person name="Lamerdin J."/>
            <person name="Stoutland P.O."/>
            <person name="Regala W.M."/>
            <person name="Georgescu A.M."/>
            <person name="Vergez L.M."/>
            <person name="Land M.L."/>
            <person name="Motin V.L."/>
            <person name="Brubaker R.R."/>
            <person name="Fowler J."/>
            <person name="Hinnebusch J."/>
            <person name="Marceau M."/>
            <person name="Medigue C."/>
            <person name="Simonet M."/>
            <person name="Chenal-Francisque V."/>
            <person name="Souza B."/>
            <person name="Dacheux D."/>
            <person name="Elliott J.M."/>
            <person name="Derbise A."/>
            <person name="Hauser L.J."/>
            <person name="Garcia E."/>
        </authorList>
    </citation>
    <scope>NUCLEOTIDE SEQUENCE [LARGE SCALE GENOMIC DNA]</scope>
    <source>
        <strain>IP32953</strain>
    </source>
</reference>
<accession>Q663Q2</accession>
<evidence type="ECO:0000255" key="1">
    <source>
        <dbReference type="HAMAP-Rule" id="MF_01393"/>
    </source>
</evidence>
<comment type="function">
    <text evidence="1">Key component of the proton channel; it plays a direct role in the translocation of protons across the membrane.</text>
</comment>
<comment type="subunit">
    <text evidence="1">F-type ATPases have 2 components, CF(1) - the catalytic core - and CF(0) - the membrane proton channel. CF(1) has five subunits: alpha(3), beta(3), gamma(1), delta(1), epsilon(1). CF(0) has three main subunits: a(1), b(2) and c(9-12). The alpha and beta chains form an alternating ring which encloses part of the gamma chain. CF(1) is attached to CF(0) by a central stalk formed by the gamma and epsilon chains, while a peripheral stalk is formed by the delta and b chains.</text>
</comment>
<comment type="subcellular location">
    <subcellularLocation>
        <location evidence="1">Cell inner membrane</location>
        <topology evidence="1">Multi-pass membrane protein</topology>
    </subcellularLocation>
</comment>
<comment type="similarity">
    <text evidence="1">Belongs to the ATPase A chain family.</text>
</comment>
<keyword id="KW-0066">ATP synthesis</keyword>
<keyword id="KW-0997">Cell inner membrane</keyword>
<keyword id="KW-1003">Cell membrane</keyword>
<keyword id="KW-0138">CF(0)</keyword>
<keyword id="KW-0375">Hydrogen ion transport</keyword>
<keyword id="KW-0406">Ion transport</keyword>
<keyword id="KW-0472">Membrane</keyword>
<keyword id="KW-0812">Transmembrane</keyword>
<keyword id="KW-1133">Transmembrane helix</keyword>
<keyword id="KW-0813">Transport</keyword>
<proteinExistence type="inferred from homology"/>
<protein>
    <recommendedName>
        <fullName evidence="1">ATP synthase subunit a</fullName>
    </recommendedName>
    <alternativeName>
        <fullName evidence="1">ATP synthase F0 sector subunit a</fullName>
    </alternativeName>
    <alternativeName>
        <fullName evidence="1">F-ATPase subunit 6</fullName>
    </alternativeName>
</protein>
<feature type="chain" id="PRO_0000362518" description="ATP synthase subunit a">
    <location>
        <begin position="1"/>
        <end position="274"/>
    </location>
</feature>
<feature type="transmembrane region" description="Helical" evidence="1">
    <location>
        <begin position="43"/>
        <end position="63"/>
    </location>
</feature>
<feature type="transmembrane region" description="Helical" evidence="1">
    <location>
        <begin position="103"/>
        <end position="123"/>
    </location>
</feature>
<feature type="transmembrane region" description="Helical" evidence="1">
    <location>
        <begin position="149"/>
        <end position="169"/>
    </location>
</feature>
<feature type="transmembrane region" description="Helical" evidence="1">
    <location>
        <begin position="223"/>
        <end position="243"/>
    </location>
</feature>
<feature type="transmembrane region" description="Helical" evidence="1">
    <location>
        <begin position="245"/>
        <end position="265"/>
    </location>
</feature>
<gene>
    <name evidence="1" type="primary">atpB</name>
    <name type="ordered locus">YPTB3973</name>
</gene>
<sequence>MSASGEISTPRDYIGHHLNHLQLDLRTFELVNPHSTGPATFWTLNIDSLFFSVVLGLAFLLVFRKVAASATSGVPGKLQTAVELIIGFVDNSVRDMYHGKSKVIAPLALTVFVWVLLMNMMDLLPIDLLPYIGEHVFGLPALRVVPTADVSITLSMALGVFILIIFYSIKMKGVGGFTKELTMQPFNHPIFIPVNLILEGVSLLSKPLSLGLRLFGNMYAGELIFILIAGLLPWWSQWMLSVPWAIFHILIITLQAFIFMVLTIVYLSMASEEH</sequence>
<organism>
    <name type="scientific">Yersinia pseudotuberculosis serotype I (strain IP32953)</name>
    <dbReference type="NCBI Taxonomy" id="273123"/>
    <lineage>
        <taxon>Bacteria</taxon>
        <taxon>Pseudomonadati</taxon>
        <taxon>Pseudomonadota</taxon>
        <taxon>Gammaproteobacteria</taxon>
        <taxon>Enterobacterales</taxon>
        <taxon>Yersiniaceae</taxon>
        <taxon>Yersinia</taxon>
    </lineage>
</organism>